<sequence>MTRPIVIAIDGPAASGKGTLARRLAAAFNLPYLDTGLLYRAVARRVLDRGGDPADPAASEEQARSLSRLDLERGDLRTPEVDRAASAVASIKPVRAALLDFQRRFADASGAVLDGRDIGTIVFPEADVKLFVTASLDVRAKRRHLERLAHGIDPGFDSVRAELAARDEADRTRAAAPLVQAKDALLLDTSQMDANHAFTAAADLVNKVLARG</sequence>
<feature type="chain" id="PRO_1000119003" description="Cytidylate kinase">
    <location>
        <begin position="1"/>
        <end position="212"/>
    </location>
</feature>
<feature type="region of interest" description="Disordered" evidence="2">
    <location>
        <begin position="50"/>
        <end position="69"/>
    </location>
</feature>
<feature type="binding site" evidence="1">
    <location>
        <begin position="11"/>
        <end position="19"/>
    </location>
    <ligand>
        <name>ATP</name>
        <dbReference type="ChEBI" id="CHEBI:30616"/>
    </ligand>
</feature>
<protein>
    <recommendedName>
        <fullName evidence="1">Cytidylate kinase</fullName>
        <shortName evidence="1">CK</shortName>
        <ecNumber evidence="1">2.7.4.25</ecNumber>
    </recommendedName>
    <alternativeName>
        <fullName evidence="1">Cytidine monophosphate kinase</fullName>
        <shortName evidence="1">CMP kinase</shortName>
    </alternativeName>
</protein>
<comment type="catalytic activity">
    <reaction evidence="1">
        <text>CMP + ATP = CDP + ADP</text>
        <dbReference type="Rhea" id="RHEA:11600"/>
        <dbReference type="ChEBI" id="CHEBI:30616"/>
        <dbReference type="ChEBI" id="CHEBI:58069"/>
        <dbReference type="ChEBI" id="CHEBI:60377"/>
        <dbReference type="ChEBI" id="CHEBI:456216"/>
        <dbReference type="EC" id="2.7.4.25"/>
    </reaction>
</comment>
<comment type="catalytic activity">
    <reaction evidence="1">
        <text>dCMP + ATP = dCDP + ADP</text>
        <dbReference type="Rhea" id="RHEA:25094"/>
        <dbReference type="ChEBI" id="CHEBI:30616"/>
        <dbReference type="ChEBI" id="CHEBI:57566"/>
        <dbReference type="ChEBI" id="CHEBI:58593"/>
        <dbReference type="ChEBI" id="CHEBI:456216"/>
        <dbReference type="EC" id="2.7.4.25"/>
    </reaction>
</comment>
<comment type="subcellular location">
    <subcellularLocation>
        <location evidence="1">Cytoplasm</location>
    </subcellularLocation>
</comment>
<comment type="similarity">
    <text evidence="1">Belongs to the cytidylate kinase family. Type 1 subfamily.</text>
</comment>
<gene>
    <name evidence="1" type="primary">cmk</name>
    <name type="ordered locus">Acry_0030</name>
</gene>
<accession>A5FUH7</accession>
<reference key="1">
    <citation type="submission" date="2007-05" db="EMBL/GenBank/DDBJ databases">
        <title>Complete sequence of chromosome of Acidiphilium cryptum JF-5.</title>
        <authorList>
            <consortium name="US DOE Joint Genome Institute"/>
            <person name="Copeland A."/>
            <person name="Lucas S."/>
            <person name="Lapidus A."/>
            <person name="Barry K."/>
            <person name="Detter J.C."/>
            <person name="Glavina del Rio T."/>
            <person name="Hammon N."/>
            <person name="Israni S."/>
            <person name="Dalin E."/>
            <person name="Tice H."/>
            <person name="Pitluck S."/>
            <person name="Sims D."/>
            <person name="Brettin T."/>
            <person name="Bruce D."/>
            <person name="Han C."/>
            <person name="Schmutz J."/>
            <person name="Larimer F."/>
            <person name="Land M."/>
            <person name="Hauser L."/>
            <person name="Kyrpides N."/>
            <person name="Kim E."/>
            <person name="Magnuson T."/>
            <person name="Richardson P."/>
        </authorList>
    </citation>
    <scope>NUCLEOTIDE SEQUENCE [LARGE SCALE GENOMIC DNA]</scope>
    <source>
        <strain>JF-5</strain>
    </source>
</reference>
<dbReference type="EC" id="2.7.4.25" evidence="1"/>
<dbReference type="EMBL" id="CP000697">
    <property type="protein sequence ID" value="ABQ29259.1"/>
    <property type="molecule type" value="Genomic_DNA"/>
</dbReference>
<dbReference type="RefSeq" id="WP_011941221.1">
    <property type="nucleotide sequence ID" value="NC_009484.1"/>
</dbReference>
<dbReference type="SMR" id="A5FUH7"/>
<dbReference type="STRING" id="349163.Acry_0030"/>
<dbReference type="KEGG" id="acr:Acry_0030"/>
<dbReference type="eggNOG" id="COG0283">
    <property type="taxonomic scope" value="Bacteria"/>
</dbReference>
<dbReference type="HOGENOM" id="CLU_079959_0_1_5"/>
<dbReference type="Proteomes" id="UP000000245">
    <property type="component" value="Chromosome"/>
</dbReference>
<dbReference type="GO" id="GO:0005737">
    <property type="term" value="C:cytoplasm"/>
    <property type="evidence" value="ECO:0007669"/>
    <property type="project" value="UniProtKB-SubCell"/>
</dbReference>
<dbReference type="GO" id="GO:0005524">
    <property type="term" value="F:ATP binding"/>
    <property type="evidence" value="ECO:0007669"/>
    <property type="project" value="UniProtKB-UniRule"/>
</dbReference>
<dbReference type="GO" id="GO:0036430">
    <property type="term" value="F:CMP kinase activity"/>
    <property type="evidence" value="ECO:0007669"/>
    <property type="project" value="RHEA"/>
</dbReference>
<dbReference type="GO" id="GO:0036431">
    <property type="term" value="F:dCMP kinase activity"/>
    <property type="evidence" value="ECO:0007669"/>
    <property type="project" value="RHEA"/>
</dbReference>
<dbReference type="GO" id="GO:0006220">
    <property type="term" value="P:pyrimidine nucleotide metabolic process"/>
    <property type="evidence" value="ECO:0007669"/>
    <property type="project" value="UniProtKB-UniRule"/>
</dbReference>
<dbReference type="CDD" id="cd02020">
    <property type="entry name" value="CMPK"/>
    <property type="match status" value="1"/>
</dbReference>
<dbReference type="Gene3D" id="3.40.50.300">
    <property type="entry name" value="P-loop containing nucleotide triphosphate hydrolases"/>
    <property type="match status" value="1"/>
</dbReference>
<dbReference type="HAMAP" id="MF_00238">
    <property type="entry name" value="Cytidyl_kinase_type1"/>
    <property type="match status" value="1"/>
</dbReference>
<dbReference type="InterPro" id="IPR003136">
    <property type="entry name" value="Cytidylate_kin"/>
</dbReference>
<dbReference type="InterPro" id="IPR011994">
    <property type="entry name" value="Cytidylate_kinase_dom"/>
</dbReference>
<dbReference type="InterPro" id="IPR027417">
    <property type="entry name" value="P-loop_NTPase"/>
</dbReference>
<dbReference type="NCBIfam" id="TIGR00017">
    <property type="entry name" value="cmk"/>
    <property type="match status" value="1"/>
</dbReference>
<dbReference type="Pfam" id="PF02224">
    <property type="entry name" value="Cytidylate_kin"/>
    <property type="match status" value="1"/>
</dbReference>
<dbReference type="SUPFAM" id="SSF52540">
    <property type="entry name" value="P-loop containing nucleoside triphosphate hydrolases"/>
    <property type="match status" value="1"/>
</dbReference>
<evidence type="ECO:0000255" key="1">
    <source>
        <dbReference type="HAMAP-Rule" id="MF_00238"/>
    </source>
</evidence>
<evidence type="ECO:0000256" key="2">
    <source>
        <dbReference type="SAM" id="MobiDB-lite"/>
    </source>
</evidence>
<proteinExistence type="inferred from homology"/>
<keyword id="KW-0067">ATP-binding</keyword>
<keyword id="KW-0963">Cytoplasm</keyword>
<keyword id="KW-0418">Kinase</keyword>
<keyword id="KW-0547">Nucleotide-binding</keyword>
<keyword id="KW-1185">Reference proteome</keyword>
<keyword id="KW-0808">Transferase</keyword>
<name>KCY_ACICJ</name>
<organism>
    <name type="scientific">Acidiphilium cryptum (strain JF-5)</name>
    <dbReference type="NCBI Taxonomy" id="349163"/>
    <lineage>
        <taxon>Bacteria</taxon>
        <taxon>Pseudomonadati</taxon>
        <taxon>Pseudomonadota</taxon>
        <taxon>Alphaproteobacteria</taxon>
        <taxon>Acetobacterales</taxon>
        <taxon>Acidocellaceae</taxon>
        <taxon>Acidiphilium</taxon>
    </lineage>
</organism>